<dbReference type="EC" id="2.7.7.9"/>
<dbReference type="EMBL" id="BX571856">
    <property type="protein sequence ID" value="CAG41559.1"/>
    <property type="molecule type" value="Genomic_DNA"/>
</dbReference>
<dbReference type="SMR" id="Q6GDU6"/>
<dbReference type="KEGG" id="sar:SAR2579"/>
<dbReference type="HOGENOM" id="CLU_029499_1_2_9"/>
<dbReference type="UniPathway" id="UPA00894"/>
<dbReference type="Proteomes" id="UP000000596">
    <property type="component" value="Chromosome"/>
</dbReference>
<dbReference type="GO" id="GO:0003983">
    <property type="term" value="F:UTP:glucose-1-phosphate uridylyltransferase activity"/>
    <property type="evidence" value="ECO:0007669"/>
    <property type="project" value="UniProtKB-EC"/>
</dbReference>
<dbReference type="GO" id="GO:0009246">
    <property type="term" value="P:enterobacterial common antigen biosynthetic process"/>
    <property type="evidence" value="ECO:0007669"/>
    <property type="project" value="UniProtKB-UniPathway"/>
</dbReference>
<dbReference type="GO" id="GO:0006011">
    <property type="term" value="P:UDP-alpha-D-glucose metabolic process"/>
    <property type="evidence" value="ECO:0007669"/>
    <property type="project" value="InterPro"/>
</dbReference>
<dbReference type="CDD" id="cd02541">
    <property type="entry name" value="UGPase_prokaryotic"/>
    <property type="match status" value="1"/>
</dbReference>
<dbReference type="Gene3D" id="3.90.550.10">
    <property type="entry name" value="Spore Coat Polysaccharide Biosynthesis Protein SpsA, Chain A"/>
    <property type="match status" value="1"/>
</dbReference>
<dbReference type="InterPro" id="IPR005771">
    <property type="entry name" value="GalU_uridylyltTrfase_bac/arc"/>
</dbReference>
<dbReference type="InterPro" id="IPR005835">
    <property type="entry name" value="NTP_transferase_dom"/>
</dbReference>
<dbReference type="InterPro" id="IPR029044">
    <property type="entry name" value="Nucleotide-diphossugar_trans"/>
</dbReference>
<dbReference type="NCBIfam" id="TIGR01099">
    <property type="entry name" value="galU"/>
    <property type="match status" value="1"/>
</dbReference>
<dbReference type="PANTHER" id="PTHR43197">
    <property type="entry name" value="UTP--GLUCOSE-1-PHOSPHATE URIDYLYLTRANSFERASE"/>
    <property type="match status" value="1"/>
</dbReference>
<dbReference type="PANTHER" id="PTHR43197:SF1">
    <property type="entry name" value="UTP--GLUCOSE-1-PHOSPHATE URIDYLYLTRANSFERASE"/>
    <property type="match status" value="1"/>
</dbReference>
<dbReference type="Pfam" id="PF00483">
    <property type="entry name" value="NTP_transferase"/>
    <property type="match status" value="1"/>
</dbReference>
<dbReference type="SUPFAM" id="SSF53448">
    <property type="entry name" value="Nucleotide-diphospho-sugar transferases"/>
    <property type="match status" value="1"/>
</dbReference>
<sequence>MKKIKKAIIPAAGLGTRFLPATKAMPKEMLPILDKPTIQYIIEEAARAGIEDIIIVTGRHKRAIEDHFDSQKELEMVLKEKGKSELLEKVQYSTELANIFYVRQKEQKGLGHAISSARQFIGNEPFAVLLGDDIVESEVPAVKQLIDVYEETGHSVIGVQEVPEADTHRYGIIDPLTKNGRQYEVKKFVEKPAQGTAPSNLAIMGRYVLTPEIFDYLKTQKEGAGNEIQLTDAIERMNNDNQVYAYDFEGERYDVGEKLGFVKTTIEYALKDDSMREELTRFIKELGL</sequence>
<reference key="1">
    <citation type="journal article" date="2004" name="Proc. Natl. Acad. Sci. U.S.A.">
        <title>Complete genomes of two clinical Staphylococcus aureus strains: evidence for the rapid evolution of virulence and drug resistance.</title>
        <authorList>
            <person name="Holden M.T.G."/>
            <person name="Feil E.J."/>
            <person name="Lindsay J.A."/>
            <person name="Peacock S.J."/>
            <person name="Day N.P.J."/>
            <person name="Enright M.C."/>
            <person name="Foster T.J."/>
            <person name="Moore C.E."/>
            <person name="Hurst L."/>
            <person name="Atkin R."/>
            <person name="Barron A."/>
            <person name="Bason N."/>
            <person name="Bentley S.D."/>
            <person name="Chillingworth C."/>
            <person name="Chillingworth T."/>
            <person name="Churcher C."/>
            <person name="Clark L."/>
            <person name="Corton C."/>
            <person name="Cronin A."/>
            <person name="Doggett J."/>
            <person name="Dowd L."/>
            <person name="Feltwell T."/>
            <person name="Hance Z."/>
            <person name="Harris B."/>
            <person name="Hauser H."/>
            <person name="Holroyd S."/>
            <person name="Jagels K."/>
            <person name="James K.D."/>
            <person name="Lennard N."/>
            <person name="Line A."/>
            <person name="Mayes R."/>
            <person name="Moule S."/>
            <person name="Mungall K."/>
            <person name="Ormond D."/>
            <person name="Quail M.A."/>
            <person name="Rabbinowitsch E."/>
            <person name="Rutherford K.M."/>
            <person name="Sanders M."/>
            <person name="Sharp S."/>
            <person name="Simmonds M."/>
            <person name="Stevens K."/>
            <person name="Whitehead S."/>
            <person name="Barrell B.G."/>
            <person name="Spratt B.G."/>
            <person name="Parkhill J."/>
        </authorList>
    </citation>
    <scope>NUCLEOTIDE SEQUENCE [LARGE SCALE GENOMIC DNA]</scope>
    <source>
        <strain>MRSA252</strain>
    </source>
</reference>
<protein>
    <recommendedName>
        <fullName>UTP--glucose-1-phosphate uridylyltransferase</fullName>
        <ecNumber>2.7.7.9</ecNumber>
    </recommendedName>
    <alternativeName>
        <fullName>Alpha-D-glucosyl-1-phosphate uridylyltransferase</fullName>
    </alternativeName>
    <alternativeName>
        <fullName>UDP-glucose pyrophosphorylase</fullName>
        <shortName>UDPGP</shortName>
    </alternativeName>
    <alternativeName>
        <fullName>Uridine diphosphoglucose pyrophosphorylase</fullName>
    </alternativeName>
</protein>
<evidence type="ECO:0000250" key="1"/>
<evidence type="ECO:0000305" key="2"/>
<feature type="chain" id="PRO_0000308307" description="UTP--glucose-1-phosphate uridylyltransferase">
    <location>
        <begin position="1"/>
        <end position="288"/>
    </location>
</feature>
<name>GTAB_STAAR</name>
<gene>
    <name type="primary">gtaB</name>
    <name type="ordered locus">SAR2579</name>
</gene>
<comment type="function">
    <text evidence="1">Catalyzes the formation of UDP-glucose from glucose-1-phosphate and UTP. This is an intermediate step in the biosynthesis of diglucosyl-diacylglycerol (Glc2-DAG), i.e. the predominant glycolipid found in the S.aureus membrane, which is also used as a membrane anchor for lipoteichoic acid (LTA) (By similarity).</text>
</comment>
<comment type="catalytic activity">
    <reaction>
        <text>alpha-D-glucose 1-phosphate + UTP + H(+) = UDP-alpha-D-glucose + diphosphate</text>
        <dbReference type="Rhea" id="RHEA:19889"/>
        <dbReference type="ChEBI" id="CHEBI:15378"/>
        <dbReference type="ChEBI" id="CHEBI:33019"/>
        <dbReference type="ChEBI" id="CHEBI:46398"/>
        <dbReference type="ChEBI" id="CHEBI:58601"/>
        <dbReference type="ChEBI" id="CHEBI:58885"/>
        <dbReference type="EC" id="2.7.7.9"/>
    </reaction>
</comment>
<comment type="pathway">
    <text>Glycolipid metabolism; diglucosyl-diacylglycerol biosynthesis.</text>
</comment>
<comment type="similarity">
    <text evidence="2">Belongs to the UDPGP type 2 family.</text>
</comment>
<keyword id="KW-0119">Carbohydrate metabolism</keyword>
<keyword id="KW-0548">Nucleotidyltransferase</keyword>
<keyword id="KW-0808">Transferase</keyword>
<accession>Q6GDU6</accession>
<organism>
    <name type="scientific">Staphylococcus aureus (strain MRSA252)</name>
    <dbReference type="NCBI Taxonomy" id="282458"/>
    <lineage>
        <taxon>Bacteria</taxon>
        <taxon>Bacillati</taxon>
        <taxon>Bacillota</taxon>
        <taxon>Bacilli</taxon>
        <taxon>Bacillales</taxon>
        <taxon>Staphylococcaceae</taxon>
        <taxon>Staphylococcus</taxon>
    </lineage>
</organism>
<proteinExistence type="inferred from homology"/>